<keyword id="KW-1185">Reference proteome</keyword>
<keyword id="KW-0687">Ribonucleoprotein</keyword>
<keyword id="KW-0689">Ribosomal protein</keyword>
<keyword id="KW-0694">RNA-binding</keyword>
<keyword id="KW-0699">rRNA-binding</keyword>
<protein>
    <recommendedName>
        <fullName evidence="1">Small ribosomal subunit protein uS19</fullName>
    </recommendedName>
    <alternativeName>
        <fullName evidence="2">30S ribosomal protein S19</fullName>
    </alternativeName>
</protein>
<accession>A1ALU5</accession>
<gene>
    <name evidence="1" type="primary">rpsS</name>
    <name type="ordered locus">Ppro_0684</name>
</gene>
<feature type="chain" id="PRO_1000051095" description="Small ribosomal subunit protein uS19">
    <location>
        <begin position="1"/>
        <end position="92"/>
    </location>
</feature>
<evidence type="ECO:0000255" key="1">
    <source>
        <dbReference type="HAMAP-Rule" id="MF_00531"/>
    </source>
</evidence>
<evidence type="ECO:0000305" key="2"/>
<name>RS19_PELPD</name>
<dbReference type="EMBL" id="CP000482">
    <property type="protein sequence ID" value="ABK98315.1"/>
    <property type="molecule type" value="Genomic_DNA"/>
</dbReference>
<dbReference type="RefSeq" id="WP_011734627.1">
    <property type="nucleotide sequence ID" value="NC_008609.1"/>
</dbReference>
<dbReference type="SMR" id="A1ALU5"/>
<dbReference type="STRING" id="338966.Ppro_0684"/>
<dbReference type="KEGG" id="ppd:Ppro_0684"/>
<dbReference type="eggNOG" id="COG0185">
    <property type="taxonomic scope" value="Bacteria"/>
</dbReference>
<dbReference type="HOGENOM" id="CLU_144911_0_1_7"/>
<dbReference type="OrthoDB" id="9797833at2"/>
<dbReference type="Proteomes" id="UP000006732">
    <property type="component" value="Chromosome"/>
</dbReference>
<dbReference type="GO" id="GO:0005737">
    <property type="term" value="C:cytoplasm"/>
    <property type="evidence" value="ECO:0007669"/>
    <property type="project" value="UniProtKB-ARBA"/>
</dbReference>
<dbReference type="GO" id="GO:0015935">
    <property type="term" value="C:small ribosomal subunit"/>
    <property type="evidence" value="ECO:0007669"/>
    <property type="project" value="InterPro"/>
</dbReference>
<dbReference type="GO" id="GO:0019843">
    <property type="term" value="F:rRNA binding"/>
    <property type="evidence" value="ECO:0007669"/>
    <property type="project" value="UniProtKB-UniRule"/>
</dbReference>
<dbReference type="GO" id="GO:0003735">
    <property type="term" value="F:structural constituent of ribosome"/>
    <property type="evidence" value="ECO:0007669"/>
    <property type="project" value="InterPro"/>
</dbReference>
<dbReference type="GO" id="GO:0000028">
    <property type="term" value="P:ribosomal small subunit assembly"/>
    <property type="evidence" value="ECO:0007669"/>
    <property type="project" value="TreeGrafter"/>
</dbReference>
<dbReference type="GO" id="GO:0006412">
    <property type="term" value="P:translation"/>
    <property type="evidence" value="ECO:0007669"/>
    <property type="project" value="UniProtKB-UniRule"/>
</dbReference>
<dbReference type="FunFam" id="3.30.860.10:FF:000001">
    <property type="entry name" value="30S ribosomal protein S19"/>
    <property type="match status" value="1"/>
</dbReference>
<dbReference type="Gene3D" id="3.30.860.10">
    <property type="entry name" value="30s Ribosomal Protein S19, Chain A"/>
    <property type="match status" value="1"/>
</dbReference>
<dbReference type="HAMAP" id="MF_00531">
    <property type="entry name" value="Ribosomal_uS19"/>
    <property type="match status" value="1"/>
</dbReference>
<dbReference type="InterPro" id="IPR002222">
    <property type="entry name" value="Ribosomal_uS19"/>
</dbReference>
<dbReference type="InterPro" id="IPR005732">
    <property type="entry name" value="Ribosomal_uS19_bac-type"/>
</dbReference>
<dbReference type="InterPro" id="IPR020934">
    <property type="entry name" value="Ribosomal_uS19_CS"/>
</dbReference>
<dbReference type="InterPro" id="IPR023575">
    <property type="entry name" value="Ribosomal_uS19_SF"/>
</dbReference>
<dbReference type="NCBIfam" id="TIGR01050">
    <property type="entry name" value="rpsS_bact"/>
    <property type="match status" value="1"/>
</dbReference>
<dbReference type="PANTHER" id="PTHR11880">
    <property type="entry name" value="RIBOSOMAL PROTEIN S19P FAMILY MEMBER"/>
    <property type="match status" value="1"/>
</dbReference>
<dbReference type="PANTHER" id="PTHR11880:SF8">
    <property type="entry name" value="SMALL RIBOSOMAL SUBUNIT PROTEIN US19M"/>
    <property type="match status" value="1"/>
</dbReference>
<dbReference type="Pfam" id="PF00203">
    <property type="entry name" value="Ribosomal_S19"/>
    <property type="match status" value="1"/>
</dbReference>
<dbReference type="PIRSF" id="PIRSF002144">
    <property type="entry name" value="Ribosomal_S19"/>
    <property type="match status" value="1"/>
</dbReference>
<dbReference type="PRINTS" id="PR00975">
    <property type="entry name" value="RIBOSOMALS19"/>
</dbReference>
<dbReference type="SUPFAM" id="SSF54570">
    <property type="entry name" value="Ribosomal protein S19"/>
    <property type="match status" value="1"/>
</dbReference>
<dbReference type="PROSITE" id="PS00323">
    <property type="entry name" value="RIBOSOMAL_S19"/>
    <property type="match status" value="1"/>
</dbReference>
<organism>
    <name type="scientific">Pelobacter propionicus (strain DSM 2379 / NBRC 103807 / OttBd1)</name>
    <dbReference type="NCBI Taxonomy" id="338966"/>
    <lineage>
        <taxon>Bacteria</taxon>
        <taxon>Pseudomonadati</taxon>
        <taxon>Thermodesulfobacteriota</taxon>
        <taxon>Desulfuromonadia</taxon>
        <taxon>Desulfuromonadales</taxon>
        <taxon>Desulfuromonadaceae</taxon>
        <taxon>Pelobacter</taxon>
    </lineage>
</organism>
<comment type="function">
    <text evidence="1">Protein S19 forms a complex with S13 that binds strongly to the 16S ribosomal RNA.</text>
</comment>
<comment type="similarity">
    <text evidence="1">Belongs to the universal ribosomal protein uS19 family.</text>
</comment>
<reference key="1">
    <citation type="submission" date="2006-10" db="EMBL/GenBank/DDBJ databases">
        <title>Complete sequence of chromosome of Pelobacter propionicus DSM 2379.</title>
        <authorList>
            <consortium name="US DOE Joint Genome Institute"/>
            <person name="Copeland A."/>
            <person name="Lucas S."/>
            <person name="Lapidus A."/>
            <person name="Barry K."/>
            <person name="Detter J.C."/>
            <person name="Glavina del Rio T."/>
            <person name="Hammon N."/>
            <person name="Israni S."/>
            <person name="Dalin E."/>
            <person name="Tice H."/>
            <person name="Pitluck S."/>
            <person name="Saunders E."/>
            <person name="Brettin T."/>
            <person name="Bruce D."/>
            <person name="Han C."/>
            <person name="Tapia R."/>
            <person name="Schmutz J."/>
            <person name="Larimer F."/>
            <person name="Land M."/>
            <person name="Hauser L."/>
            <person name="Kyrpides N."/>
            <person name="Kim E."/>
            <person name="Lovley D."/>
            <person name="Richardson P."/>
        </authorList>
    </citation>
    <scope>NUCLEOTIDE SEQUENCE [LARGE SCALE GENOMIC DNA]</scope>
    <source>
        <strain>DSM 2379 / NBRC 103807 / OttBd1</strain>
    </source>
</reference>
<proteinExistence type="inferred from homology"/>
<sequence length="92" mass="10359">MARSIKKGPFIDEHLAKKVLAEGPNSKKIIKTWSRRSTITPDFIGLSFAVHNGRKFVPVYVTENMVGHKLGEFSPTRTFHGHAADRKSKAKR</sequence>